<accession>P79712</accession>
<gene>
    <name type="primary">dhh</name>
</gene>
<dbReference type="EMBL" id="U51387">
    <property type="protein sequence ID" value="AAB38612.1"/>
    <property type="molecule type" value="Genomic_DNA"/>
</dbReference>
<dbReference type="SMR" id="P79712"/>
<dbReference type="GO" id="GO:0005615">
    <property type="term" value="C:extracellular space"/>
    <property type="evidence" value="ECO:0007669"/>
    <property type="project" value="TreeGrafter"/>
</dbReference>
<dbReference type="GO" id="GO:0005886">
    <property type="term" value="C:plasma membrane"/>
    <property type="evidence" value="ECO:0007669"/>
    <property type="project" value="UniProtKB-SubCell"/>
</dbReference>
<dbReference type="GO" id="GO:0005509">
    <property type="term" value="F:calcium ion binding"/>
    <property type="evidence" value="ECO:0007669"/>
    <property type="project" value="TreeGrafter"/>
</dbReference>
<dbReference type="GO" id="GO:0005113">
    <property type="term" value="F:patched binding"/>
    <property type="evidence" value="ECO:0007669"/>
    <property type="project" value="TreeGrafter"/>
</dbReference>
<dbReference type="GO" id="GO:0008233">
    <property type="term" value="F:peptidase activity"/>
    <property type="evidence" value="ECO:0007669"/>
    <property type="project" value="UniProtKB-KW"/>
</dbReference>
<dbReference type="GO" id="GO:0001708">
    <property type="term" value="P:cell fate specification"/>
    <property type="evidence" value="ECO:0007669"/>
    <property type="project" value="TreeGrafter"/>
</dbReference>
<dbReference type="GO" id="GO:0007267">
    <property type="term" value="P:cell-cell signaling"/>
    <property type="evidence" value="ECO:0007669"/>
    <property type="project" value="InterPro"/>
</dbReference>
<dbReference type="GO" id="GO:0006508">
    <property type="term" value="P:proteolysis"/>
    <property type="evidence" value="ECO:0007669"/>
    <property type="project" value="UniProtKB-KW"/>
</dbReference>
<dbReference type="GO" id="GO:0010468">
    <property type="term" value="P:regulation of gene expression"/>
    <property type="evidence" value="ECO:0007669"/>
    <property type="project" value="TreeGrafter"/>
</dbReference>
<dbReference type="GO" id="GO:0007224">
    <property type="term" value="P:smoothened signaling pathway"/>
    <property type="evidence" value="ECO:0007669"/>
    <property type="project" value="TreeGrafter"/>
</dbReference>
<dbReference type="Gene3D" id="3.30.1380.10">
    <property type="match status" value="1"/>
</dbReference>
<dbReference type="InterPro" id="IPR001657">
    <property type="entry name" value="Hedgehog"/>
</dbReference>
<dbReference type="InterPro" id="IPR009045">
    <property type="entry name" value="Hedgehog_sig/DD-Pept_Zn-bd_sf"/>
</dbReference>
<dbReference type="InterPro" id="IPR050387">
    <property type="entry name" value="Hedgehog_Signaling"/>
</dbReference>
<dbReference type="InterPro" id="IPR000320">
    <property type="entry name" value="Hedgehog_signalling_dom"/>
</dbReference>
<dbReference type="PANTHER" id="PTHR11889">
    <property type="entry name" value="HEDGEHOG"/>
    <property type="match status" value="1"/>
</dbReference>
<dbReference type="PANTHER" id="PTHR11889:SF39">
    <property type="entry name" value="INDIAN HEDGEHOG PROTEIN"/>
    <property type="match status" value="1"/>
</dbReference>
<dbReference type="Pfam" id="PF01085">
    <property type="entry name" value="HH_signal"/>
    <property type="match status" value="1"/>
</dbReference>
<dbReference type="PRINTS" id="PR00632">
    <property type="entry name" value="SONICHHOG"/>
</dbReference>
<dbReference type="SUPFAM" id="SSF55166">
    <property type="entry name" value="Hedgehog/DD-peptidase"/>
    <property type="match status" value="1"/>
</dbReference>
<reference key="1">
    <citation type="journal article" date="1996" name="Proc. Natl. Acad. Sci. U.S.A.">
        <title>Evolutionary analyses of hedgehog and Hoxd-10 genes in fish species closely related to the zebrafish.</title>
        <authorList>
            <person name="Zardoya R."/>
            <person name="Abouheif E."/>
            <person name="Meyer A."/>
        </authorList>
    </citation>
    <scope>NUCLEOTIDE SEQUENCE [GENOMIC DNA]</scope>
    <source>
        <tissue>Muscle</tissue>
    </source>
</reference>
<protein>
    <recommendedName>
        <fullName>Desert hedgehog protein</fullName>
        <shortName>DHH</shortName>
    </recommendedName>
</protein>
<keyword id="KW-0068">Autocatalytic cleavage</keyword>
<keyword id="KW-0106">Calcium</keyword>
<keyword id="KW-1003">Cell membrane</keyword>
<keyword id="KW-0217">Developmental protein</keyword>
<keyword id="KW-0378">Hydrolase</keyword>
<keyword id="KW-0472">Membrane</keyword>
<keyword id="KW-0479">Metal-binding</keyword>
<keyword id="KW-0645">Protease</keyword>
<keyword id="KW-0964">Secreted</keyword>
<keyword id="KW-0862">Zinc</keyword>
<feature type="chain" id="PRO_0000058751" description="Desert hedgehog protein">
    <location>
        <begin position="1" status="less than"/>
        <end position="58" status="greater than"/>
    </location>
</feature>
<feature type="binding site" evidence="2">
    <location>
        <position position="13"/>
    </location>
    <ligand>
        <name>Ca(2+)</name>
        <dbReference type="ChEBI" id="CHEBI:29108"/>
        <label>1</label>
    </ligand>
</feature>
<feature type="binding site" evidence="2">
    <location>
        <position position="14"/>
    </location>
    <ligand>
        <name>Ca(2+)</name>
        <dbReference type="ChEBI" id="CHEBI:29108"/>
        <label>1</label>
    </ligand>
</feature>
<feature type="binding site" evidence="2">
    <location>
        <position position="14"/>
    </location>
    <ligand>
        <name>Ca(2+)</name>
        <dbReference type="ChEBI" id="CHEBI:29108"/>
        <label>2</label>
    </ligand>
</feature>
<feature type="binding site" evidence="2">
    <location>
        <position position="17"/>
    </location>
    <ligand>
        <name>Ca(2+)</name>
        <dbReference type="ChEBI" id="CHEBI:29108"/>
        <label>2</label>
    </ligand>
</feature>
<feature type="binding site" evidence="2">
    <location>
        <position position="19"/>
    </location>
    <ligand>
        <name>Ca(2+)</name>
        <dbReference type="ChEBI" id="CHEBI:29108"/>
        <label>2</label>
    </ligand>
</feature>
<feature type="binding site" evidence="2">
    <location>
        <position position="28"/>
    </location>
    <ligand>
        <name>Zn(2+)</name>
        <dbReference type="ChEBI" id="CHEBI:29105"/>
    </ligand>
</feature>
<feature type="binding site" evidence="2">
    <location>
        <position position="35"/>
    </location>
    <ligand>
        <name>Zn(2+)</name>
        <dbReference type="ChEBI" id="CHEBI:29105"/>
    </ligand>
</feature>
<feature type="non-terminal residue">
    <location>
        <position position="1"/>
    </location>
</feature>
<feature type="non-terminal residue">
    <location>
        <position position="58"/>
    </location>
</feature>
<organism>
    <name type="scientific">Danio kerri</name>
    <name type="common">Blue danio</name>
    <name type="synonym">Brachydanio kerri</name>
    <dbReference type="NCBI Taxonomy" id="38750"/>
    <lineage>
        <taxon>Eukaryota</taxon>
        <taxon>Metazoa</taxon>
        <taxon>Chordata</taxon>
        <taxon>Craniata</taxon>
        <taxon>Vertebrata</taxon>
        <taxon>Euteleostomi</taxon>
        <taxon>Actinopterygii</taxon>
        <taxon>Neopterygii</taxon>
        <taxon>Teleostei</taxon>
        <taxon>Ostariophysi</taxon>
        <taxon>Cypriniformes</taxon>
        <taxon>Danionidae</taxon>
        <taxon>Danioninae</taxon>
        <taxon>Danio</taxon>
    </lineage>
</organism>
<name>DHH_DANKE</name>
<proteinExistence type="inferred from homology"/>
<sequence length="58" mass="6657">VMNMWPGVKLRVTEGWDEDGNHFEDSLHYEGRAVDITTSDRDRNKYGMLARLAVEAGF</sequence>
<evidence type="ECO:0000250" key="1"/>
<evidence type="ECO:0000250" key="2">
    <source>
        <dbReference type="UniProtKB" id="O43323"/>
    </source>
</evidence>
<evidence type="ECO:0000305" key="3"/>
<comment type="function">
    <text evidence="1">Intercellular signal essential for a variety of patterning events during development.</text>
</comment>
<comment type="subcellular location">
    <subcellularLocation>
        <location evidence="1">Cell membrane</location>
    </subcellularLocation>
    <subcellularLocation>
        <location evidence="1">Secreted</location>
        <location evidence="1">Extracellular space</location>
    </subcellularLocation>
    <text evidence="1">Desert hedgehog protein N-product: Cell membrane; Lipid-anchor; Extracellular side. The N-terminal peptide remains associated with the cell surface. Desert hedgehog protein C-product: Secreted, extracellular space. The C-terminal peptide diffuses from the cell.</text>
</comment>
<comment type="domain">
    <text evidence="1">The desert hedgehog protein N-product binds calcium and zinc ions; this stabilizes the protein fold and is essential for protein-protein interactions mediated by this domain.</text>
</comment>
<comment type="PTM">
    <text evidence="1">The C-terminal domain displays an autoproteolysis activity and a cholesterol transferase activity. Both activities result in the cleavage of the full-length protein and covalent attachment of a cholesterol moiety to the C-terminal of the newly generated N-terminal fragment (N-product). This covalent modification appears to play an essential role in restricting the spatial distribution of the protein activity to the cell surface. The N-product is the active species in both local and long-range signaling, whereas the C-product has no signaling activity (By similarity).</text>
</comment>
<comment type="similarity">
    <text evidence="3">Belongs to the hedgehog family.</text>
</comment>